<reference key="1">
    <citation type="journal article" date="2003" name="Science">
        <title>Role of mobile DNA in the evolution of vancomycin-resistant Enterococcus faecalis.</title>
        <authorList>
            <person name="Paulsen I.T."/>
            <person name="Banerjei L."/>
            <person name="Myers G.S.A."/>
            <person name="Nelson K.E."/>
            <person name="Seshadri R."/>
            <person name="Read T.D."/>
            <person name="Fouts D.E."/>
            <person name="Eisen J.A."/>
            <person name="Gill S.R."/>
            <person name="Heidelberg J.F."/>
            <person name="Tettelin H."/>
            <person name="Dodson R.J."/>
            <person name="Umayam L.A."/>
            <person name="Brinkac L.M."/>
            <person name="Beanan M.J."/>
            <person name="Daugherty S.C."/>
            <person name="DeBoy R.T."/>
            <person name="Durkin S.A."/>
            <person name="Kolonay J.F."/>
            <person name="Madupu R."/>
            <person name="Nelson W.C."/>
            <person name="Vamathevan J.J."/>
            <person name="Tran B."/>
            <person name="Upton J."/>
            <person name="Hansen T."/>
            <person name="Shetty J."/>
            <person name="Khouri H.M."/>
            <person name="Utterback T.R."/>
            <person name="Radune D."/>
            <person name="Ketchum K.A."/>
            <person name="Dougherty B.A."/>
            <person name="Fraser C.M."/>
        </authorList>
    </citation>
    <scope>NUCLEOTIDE SEQUENCE [LARGE SCALE GENOMIC DNA]</scope>
    <source>
        <strain>ATCC 700802 / V583</strain>
    </source>
</reference>
<keyword id="KW-0030">Aminoacyl-tRNA synthetase</keyword>
<keyword id="KW-0067">ATP-binding</keyword>
<keyword id="KW-0963">Cytoplasm</keyword>
<keyword id="KW-0436">Ligase</keyword>
<keyword id="KW-0547">Nucleotide-binding</keyword>
<keyword id="KW-0648">Protein biosynthesis</keyword>
<keyword id="KW-1185">Reference proteome</keyword>
<protein>
    <recommendedName>
        <fullName evidence="1">Arginine--tRNA ligase</fullName>
        <ecNumber evidence="1">6.1.1.19</ecNumber>
    </recommendedName>
    <alternativeName>
        <fullName evidence="1">Arginyl-tRNA synthetase</fullName>
        <shortName evidence="1">ArgRS</shortName>
    </alternativeName>
</protein>
<proteinExistence type="inferred from homology"/>
<evidence type="ECO:0000255" key="1">
    <source>
        <dbReference type="HAMAP-Rule" id="MF_00123"/>
    </source>
</evidence>
<feature type="chain" id="PRO_0000151560" description="Arginine--tRNA ligase">
    <location>
        <begin position="1"/>
        <end position="563"/>
    </location>
</feature>
<feature type="short sequence motif" description="'HIGH' region">
    <location>
        <begin position="122"/>
        <end position="132"/>
    </location>
</feature>
<sequence length="563" mass="64154">MNNKEIVAKALHDVLNEELTMDQIEQLLENPKSVDHGDVAFPAFSLAKIYRKAPQQIAAELAEKIDGTNFEKIEVVGPYLNFFMNKEAVSQAVIGEVVKEKNNYGNSTFGNNGNVPIDMSSPNIAKPISMGHLRSTVIGNSIAFILEKIGYQPIRINHLGDWGTQFGKLIVAYKKWGSEEAVRQQPINELLRLYVQFHEEAEEKPELEDEARAWFKKLEEGDQEANELWKWFRSESLKEFDKIYSMLEVEFDSYNGEAFYNDKMDEIVTLLEEKHLLTENQGAEIVDLTEYNLNPALIRKSDGATLYITRDLAAALYRKRTYDFAKSLYVVGNEQSNHFKQLKAVLKELGFDWSDDMEHIPFGLITQGGKKLSTRKGKIVLLEEVLNEAVTLAGNQINEKNPDLANREEVAKQVGVGAVIFHDLKNDRLNNFDFVLDEVVRFEGETGPYVQYTHARAMSILRKANFTPDATQRYALNDKDSWEVVKLLQKFPETVMQAAEKYEPSVIAKHSIHLAQAFNKYYAHVRILDEDAQKEARLALVYAVATVLKEDLRLLGLHAPEEM</sequence>
<comment type="catalytic activity">
    <reaction evidence="1">
        <text>tRNA(Arg) + L-arginine + ATP = L-arginyl-tRNA(Arg) + AMP + diphosphate</text>
        <dbReference type="Rhea" id="RHEA:20301"/>
        <dbReference type="Rhea" id="RHEA-COMP:9658"/>
        <dbReference type="Rhea" id="RHEA-COMP:9673"/>
        <dbReference type="ChEBI" id="CHEBI:30616"/>
        <dbReference type="ChEBI" id="CHEBI:32682"/>
        <dbReference type="ChEBI" id="CHEBI:33019"/>
        <dbReference type="ChEBI" id="CHEBI:78442"/>
        <dbReference type="ChEBI" id="CHEBI:78513"/>
        <dbReference type="ChEBI" id="CHEBI:456215"/>
        <dbReference type="EC" id="6.1.1.19"/>
    </reaction>
</comment>
<comment type="subunit">
    <text evidence="1">Monomer.</text>
</comment>
<comment type="subcellular location">
    <subcellularLocation>
        <location evidence="1">Cytoplasm</location>
    </subcellularLocation>
</comment>
<comment type="similarity">
    <text evidence="1">Belongs to the class-I aminoacyl-tRNA synthetase family.</text>
</comment>
<accession>Q831N1</accession>
<name>SYR_ENTFA</name>
<organism>
    <name type="scientific">Enterococcus faecalis (strain ATCC 700802 / V583)</name>
    <dbReference type="NCBI Taxonomy" id="226185"/>
    <lineage>
        <taxon>Bacteria</taxon>
        <taxon>Bacillati</taxon>
        <taxon>Bacillota</taxon>
        <taxon>Bacilli</taxon>
        <taxon>Lactobacillales</taxon>
        <taxon>Enterococcaceae</taxon>
        <taxon>Enterococcus</taxon>
    </lineage>
</organism>
<dbReference type="EC" id="6.1.1.19" evidence="1"/>
<dbReference type="EMBL" id="AE016830">
    <property type="protein sequence ID" value="AAO82188.1"/>
    <property type="molecule type" value="Genomic_DNA"/>
</dbReference>
<dbReference type="RefSeq" id="NP_816118.1">
    <property type="nucleotide sequence ID" value="NC_004668.1"/>
</dbReference>
<dbReference type="RefSeq" id="WP_002370456.1">
    <property type="nucleotide sequence ID" value="NZ_KE136528.1"/>
</dbReference>
<dbReference type="SMR" id="Q831N1"/>
<dbReference type="STRING" id="226185.EF_2471"/>
<dbReference type="EnsemblBacteria" id="AAO82188">
    <property type="protein sequence ID" value="AAO82188"/>
    <property type="gene ID" value="EF_2471"/>
</dbReference>
<dbReference type="KEGG" id="efa:EF2471"/>
<dbReference type="PATRIC" id="fig|226185.45.peg.1076"/>
<dbReference type="eggNOG" id="COG0018">
    <property type="taxonomic scope" value="Bacteria"/>
</dbReference>
<dbReference type="HOGENOM" id="CLU_006406_6_1_9"/>
<dbReference type="Proteomes" id="UP000001415">
    <property type="component" value="Chromosome"/>
</dbReference>
<dbReference type="GO" id="GO:0005737">
    <property type="term" value="C:cytoplasm"/>
    <property type="evidence" value="ECO:0007669"/>
    <property type="project" value="UniProtKB-SubCell"/>
</dbReference>
<dbReference type="GO" id="GO:0004814">
    <property type="term" value="F:arginine-tRNA ligase activity"/>
    <property type="evidence" value="ECO:0007669"/>
    <property type="project" value="UniProtKB-UniRule"/>
</dbReference>
<dbReference type="GO" id="GO:0005524">
    <property type="term" value="F:ATP binding"/>
    <property type="evidence" value="ECO:0007669"/>
    <property type="project" value="UniProtKB-UniRule"/>
</dbReference>
<dbReference type="GO" id="GO:0006420">
    <property type="term" value="P:arginyl-tRNA aminoacylation"/>
    <property type="evidence" value="ECO:0007669"/>
    <property type="project" value="UniProtKB-UniRule"/>
</dbReference>
<dbReference type="CDD" id="cd07956">
    <property type="entry name" value="Anticodon_Ia_Arg"/>
    <property type="match status" value="1"/>
</dbReference>
<dbReference type="CDD" id="cd00671">
    <property type="entry name" value="ArgRS_core"/>
    <property type="match status" value="1"/>
</dbReference>
<dbReference type="FunFam" id="3.40.50.620:FF:000116">
    <property type="entry name" value="Arginine--tRNA ligase"/>
    <property type="match status" value="1"/>
</dbReference>
<dbReference type="FunFam" id="1.10.730.10:FF:000006">
    <property type="entry name" value="Arginyl-tRNA synthetase 2, mitochondrial"/>
    <property type="match status" value="1"/>
</dbReference>
<dbReference type="Gene3D" id="3.30.1360.70">
    <property type="entry name" value="Arginyl tRNA synthetase N-terminal domain"/>
    <property type="match status" value="1"/>
</dbReference>
<dbReference type="Gene3D" id="3.40.50.620">
    <property type="entry name" value="HUPs"/>
    <property type="match status" value="1"/>
</dbReference>
<dbReference type="Gene3D" id="1.10.730.10">
    <property type="entry name" value="Isoleucyl-tRNA Synthetase, Domain 1"/>
    <property type="match status" value="1"/>
</dbReference>
<dbReference type="HAMAP" id="MF_00123">
    <property type="entry name" value="Arg_tRNA_synth"/>
    <property type="match status" value="1"/>
</dbReference>
<dbReference type="InterPro" id="IPR001278">
    <property type="entry name" value="Arg-tRNA-ligase"/>
</dbReference>
<dbReference type="InterPro" id="IPR005148">
    <property type="entry name" value="Arg-tRNA-synth_N"/>
</dbReference>
<dbReference type="InterPro" id="IPR036695">
    <property type="entry name" value="Arg-tRNA-synth_N_sf"/>
</dbReference>
<dbReference type="InterPro" id="IPR035684">
    <property type="entry name" value="ArgRS_core"/>
</dbReference>
<dbReference type="InterPro" id="IPR008909">
    <property type="entry name" value="DALR_anticod-bd"/>
</dbReference>
<dbReference type="InterPro" id="IPR014729">
    <property type="entry name" value="Rossmann-like_a/b/a_fold"/>
</dbReference>
<dbReference type="InterPro" id="IPR009080">
    <property type="entry name" value="tRNAsynth_Ia_anticodon-bd"/>
</dbReference>
<dbReference type="NCBIfam" id="TIGR00456">
    <property type="entry name" value="argS"/>
    <property type="match status" value="1"/>
</dbReference>
<dbReference type="PANTHER" id="PTHR11956:SF5">
    <property type="entry name" value="ARGININE--TRNA LIGASE, CYTOPLASMIC"/>
    <property type="match status" value="1"/>
</dbReference>
<dbReference type="PANTHER" id="PTHR11956">
    <property type="entry name" value="ARGINYL-TRNA SYNTHETASE"/>
    <property type="match status" value="1"/>
</dbReference>
<dbReference type="Pfam" id="PF03485">
    <property type="entry name" value="Arg_tRNA_synt_N"/>
    <property type="match status" value="1"/>
</dbReference>
<dbReference type="Pfam" id="PF05746">
    <property type="entry name" value="DALR_1"/>
    <property type="match status" value="1"/>
</dbReference>
<dbReference type="Pfam" id="PF00750">
    <property type="entry name" value="tRNA-synt_1d"/>
    <property type="match status" value="1"/>
</dbReference>
<dbReference type="PRINTS" id="PR01038">
    <property type="entry name" value="TRNASYNTHARG"/>
</dbReference>
<dbReference type="SMART" id="SM01016">
    <property type="entry name" value="Arg_tRNA_synt_N"/>
    <property type="match status" value="1"/>
</dbReference>
<dbReference type="SMART" id="SM00836">
    <property type="entry name" value="DALR_1"/>
    <property type="match status" value="1"/>
</dbReference>
<dbReference type="SUPFAM" id="SSF47323">
    <property type="entry name" value="Anticodon-binding domain of a subclass of class I aminoacyl-tRNA synthetases"/>
    <property type="match status" value="1"/>
</dbReference>
<dbReference type="SUPFAM" id="SSF55190">
    <property type="entry name" value="Arginyl-tRNA synthetase (ArgRS), N-terminal 'additional' domain"/>
    <property type="match status" value="1"/>
</dbReference>
<dbReference type="SUPFAM" id="SSF52374">
    <property type="entry name" value="Nucleotidylyl transferase"/>
    <property type="match status" value="1"/>
</dbReference>
<gene>
    <name evidence="1" type="primary">argS</name>
    <name type="ordered locus">EF_2471</name>
</gene>